<sequence>MLSADEKQLILHAWEKVHTHQEDFGAEALERMFTVYPQTKTYFHHFDLHHGSEQIRRHGKKVVVALENAVHHMDNLSAALCKLSDLHAYNLRVDPVNFKLLSHCFHVVLAGHLGEEYSPQVHVAYDKFLAAVSDVLAEKYR</sequence>
<reference key="1">
    <citation type="journal article" date="1984" name="Hoppe-Seyler's Z. Physiol. Chem.">
        <title>Hemoglobins of reptiles. Expression of alpha-D-genes in the turtles, Chrysemys picta bellii and Phrynops hilarii (Testudines).</title>
        <authorList>
            <person name="Ruecknagel K.P."/>
            <person name="Reischl E."/>
            <person name="Braunitzer G."/>
        </authorList>
    </citation>
    <scope>PROTEIN SEQUENCE</scope>
</reference>
<name>HBAD_PHRHI</name>
<proteinExistence type="evidence at protein level"/>
<accession>P02006</accession>
<comment type="function">
    <text>Involved in oxygen transport from the lung to the various peripheral tissues.</text>
</comment>
<comment type="subunit">
    <text>Heterotetramer of two alpha-D chains and two beta chains.</text>
</comment>
<comment type="tissue specificity">
    <text>Red blood cells.</text>
</comment>
<comment type="developmental stage">
    <text>In reptiles, the alpha-D chain occurs in a minor hemoglobin component, called hemoglobin d, which is expressed in late embryonic and adult life.</text>
</comment>
<comment type="similarity">
    <text evidence="1">Belongs to the globin family.</text>
</comment>
<protein>
    <recommendedName>
        <fullName>Hemoglobin subunit alpha-D</fullName>
    </recommendedName>
    <alternativeName>
        <fullName>Alpha-D-globin</fullName>
    </alternativeName>
    <alternativeName>
        <fullName>Component CII</fullName>
    </alternativeName>
    <alternativeName>
        <fullName>Hemoglobin alpha-D chain</fullName>
    </alternativeName>
</protein>
<evidence type="ECO:0000255" key="1">
    <source>
        <dbReference type="PROSITE-ProRule" id="PRU00238"/>
    </source>
</evidence>
<organism>
    <name type="scientific">Phrynops hilarii</name>
    <name type="common">Snake-necked turtle</name>
    <dbReference type="NCBI Taxonomy" id="8463"/>
    <lineage>
        <taxon>Eukaryota</taxon>
        <taxon>Metazoa</taxon>
        <taxon>Chordata</taxon>
        <taxon>Craniata</taxon>
        <taxon>Vertebrata</taxon>
        <taxon>Euteleostomi</taxon>
        <taxon>Archelosauria</taxon>
        <taxon>Testudinata</taxon>
        <taxon>Testudines</taxon>
        <taxon>Pleurodira</taxon>
        <taxon>Chelidae</taxon>
        <taxon>Phrynops</taxon>
    </lineage>
</organism>
<feature type="chain" id="PRO_0000052837" description="Hemoglobin subunit alpha-D">
    <location>
        <begin position="1"/>
        <end position="141"/>
    </location>
</feature>
<feature type="domain" description="Globin" evidence="1">
    <location>
        <begin position="1"/>
        <end position="141"/>
    </location>
</feature>
<feature type="binding site" description="distal binding residue">
    <location>
        <position position="58"/>
    </location>
    <ligand>
        <name>heme b</name>
        <dbReference type="ChEBI" id="CHEBI:60344"/>
    </ligand>
    <ligandPart>
        <name>Fe</name>
        <dbReference type="ChEBI" id="CHEBI:18248"/>
    </ligandPart>
</feature>
<feature type="binding site" description="proximal binding residue">
    <location>
        <position position="87"/>
    </location>
    <ligand>
        <name>heme b</name>
        <dbReference type="ChEBI" id="CHEBI:60344"/>
    </ligand>
    <ligandPart>
        <name>Fe</name>
        <dbReference type="ChEBI" id="CHEBI:18248"/>
    </ligandPart>
</feature>
<dbReference type="PIR" id="A02333">
    <property type="entry name" value="HATTD"/>
</dbReference>
<dbReference type="SMR" id="P02006"/>
<dbReference type="GO" id="GO:0072562">
    <property type="term" value="C:blood microparticle"/>
    <property type="evidence" value="ECO:0007669"/>
    <property type="project" value="TreeGrafter"/>
</dbReference>
<dbReference type="GO" id="GO:0031838">
    <property type="term" value="C:haptoglobin-hemoglobin complex"/>
    <property type="evidence" value="ECO:0007669"/>
    <property type="project" value="TreeGrafter"/>
</dbReference>
<dbReference type="GO" id="GO:0005833">
    <property type="term" value="C:hemoglobin complex"/>
    <property type="evidence" value="ECO:0007669"/>
    <property type="project" value="InterPro"/>
</dbReference>
<dbReference type="GO" id="GO:0031720">
    <property type="term" value="F:haptoglobin binding"/>
    <property type="evidence" value="ECO:0007669"/>
    <property type="project" value="TreeGrafter"/>
</dbReference>
<dbReference type="GO" id="GO:0020037">
    <property type="term" value="F:heme binding"/>
    <property type="evidence" value="ECO:0007669"/>
    <property type="project" value="InterPro"/>
</dbReference>
<dbReference type="GO" id="GO:0046872">
    <property type="term" value="F:metal ion binding"/>
    <property type="evidence" value="ECO:0007669"/>
    <property type="project" value="UniProtKB-KW"/>
</dbReference>
<dbReference type="GO" id="GO:0043177">
    <property type="term" value="F:organic acid binding"/>
    <property type="evidence" value="ECO:0007669"/>
    <property type="project" value="TreeGrafter"/>
</dbReference>
<dbReference type="GO" id="GO:0019825">
    <property type="term" value="F:oxygen binding"/>
    <property type="evidence" value="ECO:0007669"/>
    <property type="project" value="InterPro"/>
</dbReference>
<dbReference type="GO" id="GO:0005344">
    <property type="term" value="F:oxygen carrier activity"/>
    <property type="evidence" value="ECO:0007669"/>
    <property type="project" value="UniProtKB-KW"/>
</dbReference>
<dbReference type="GO" id="GO:0004601">
    <property type="term" value="F:peroxidase activity"/>
    <property type="evidence" value="ECO:0007669"/>
    <property type="project" value="TreeGrafter"/>
</dbReference>
<dbReference type="GO" id="GO:0042744">
    <property type="term" value="P:hydrogen peroxide catabolic process"/>
    <property type="evidence" value="ECO:0007669"/>
    <property type="project" value="TreeGrafter"/>
</dbReference>
<dbReference type="CDD" id="cd08927">
    <property type="entry name" value="Hb-alpha-like"/>
    <property type="match status" value="1"/>
</dbReference>
<dbReference type="FunFam" id="1.10.490.10:FF:000002">
    <property type="entry name" value="Hemoglobin subunit alpha"/>
    <property type="match status" value="1"/>
</dbReference>
<dbReference type="Gene3D" id="1.10.490.10">
    <property type="entry name" value="Globins"/>
    <property type="match status" value="1"/>
</dbReference>
<dbReference type="InterPro" id="IPR000971">
    <property type="entry name" value="Globin"/>
</dbReference>
<dbReference type="InterPro" id="IPR009050">
    <property type="entry name" value="Globin-like_sf"/>
</dbReference>
<dbReference type="InterPro" id="IPR012292">
    <property type="entry name" value="Globin/Proto"/>
</dbReference>
<dbReference type="InterPro" id="IPR002338">
    <property type="entry name" value="Hemoglobin_a-typ"/>
</dbReference>
<dbReference type="InterPro" id="IPR050056">
    <property type="entry name" value="Hemoglobin_oxygen_transport"/>
</dbReference>
<dbReference type="PANTHER" id="PTHR11442">
    <property type="entry name" value="HEMOGLOBIN FAMILY MEMBER"/>
    <property type="match status" value="1"/>
</dbReference>
<dbReference type="PANTHER" id="PTHR11442:SF41">
    <property type="entry name" value="HEMOGLOBIN SUBUNIT ZETA"/>
    <property type="match status" value="1"/>
</dbReference>
<dbReference type="Pfam" id="PF00042">
    <property type="entry name" value="Globin"/>
    <property type="match status" value="1"/>
</dbReference>
<dbReference type="PRINTS" id="PR00612">
    <property type="entry name" value="ALPHAHAEM"/>
</dbReference>
<dbReference type="SUPFAM" id="SSF46458">
    <property type="entry name" value="Globin-like"/>
    <property type="match status" value="1"/>
</dbReference>
<dbReference type="PROSITE" id="PS01033">
    <property type="entry name" value="GLOBIN"/>
    <property type="match status" value="1"/>
</dbReference>
<gene>
    <name type="primary">HBAD</name>
</gene>
<keyword id="KW-0903">Direct protein sequencing</keyword>
<keyword id="KW-0349">Heme</keyword>
<keyword id="KW-0408">Iron</keyword>
<keyword id="KW-0479">Metal-binding</keyword>
<keyword id="KW-0561">Oxygen transport</keyword>
<keyword id="KW-0813">Transport</keyword>